<accession>A9KUK5</accession>
<name>RS2_SHEB9</name>
<proteinExistence type="inferred from homology"/>
<evidence type="ECO:0000255" key="1">
    <source>
        <dbReference type="HAMAP-Rule" id="MF_00291"/>
    </source>
</evidence>
<evidence type="ECO:0000305" key="2"/>
<sequence length="242" mass="26570">MTTVSMRDMLQAGVHFGHQTRYWNPKMKPFIFGARNGVHIINLEHTVPMFNEALAFISNVASKKGKVLFVGTKRAAGEAIKESALSCDQFYVDHRWLGGMLTNWKTVRQSIKRLKELESQSVDGTFDKLTKKEALMRTRELEKLEKSLGGIKNMGGLPDVLFVIGADHEHIAIKEANNLGIPVVAVVDTNSAPDGVNYIVPGNDDAMRAIRLYTSSVAAAAKAGRGQDLAVQAEQDGFVEAE</sequence>
<reference key="1">
    <citation type="submission" date="2007-11" db="EMBL/GenBank/DDBJ databases">
        <title>Complete sequence of chromosome of Shewanella baltica OS195.</title>
        <authorList>
            <consortium name="US DOE Joint Genome Institute"/>
            <person name="Copeland A."/>
            <person name="Lucas S."/>
            <person name="Lapidus A."/>
            <person name="Barry K."/>
            <person name="Glavina del Rio T."/>
            <person name="Dalin E."/>
            <person name="Tice H."/>
            <person name="Pitluck S."/>
            <person name="Chain P."/>
            <person name="Malfatti S."/>
            <person name="Shin M."/>
            <person name="Vergez L."/>
            <person name="Schmutz J."/>
            <person name="Larimer F."/>
            <person name="Land M."/>
            <person name="Hauser L."/>
            <person name="Kyrpides N."/>
            <person name="Kim E."/>
            <person name="Brettar I."/>
            <person name="Rodrigues J."/>
            <person name="Konstantinidis K."/>
            <person name="Klappenbach J."/>
            <person name="Hofle M."/>
            <person name="Tiedje J."/>
            <person name="Richardson P."/>
        </authorList>
    </citation>
    <scope>NUCLEOTIDE SEQUENCE [LARGE SCALE GENOMIC DNA]</scope>
    <source>
        <strain>OS195</strain>
    </source>
</reference>
<protein>
    <recommendedName>
        <fullName evidence="1">Small ribosomal subunit protein uS2</fullName>
    </recommendedName>
    <alternativeName>
        <fullName evidence="2">30S ribosomal protein S2</fullName>
    </alternativeName>
</protein>
<dbReference type="EMBL" id="CP000891">
    <property type="protein sequence ID" value="ABX48654.1"/>
    <property type="molecule type" value="Genomic_DNA"/>
</dbReference>
<dbReference type="RefSeq" id="WP_006080979.1">
    <property type="nucleotide sequence ID" value="NC_009997.1"/>
</dbReference>
<dbReference type="SMR" id="A9KUK5"/>
<dbReference type="GeneID" id="11771730"/>
<dbReference type="KEGG" id="sbn:Sbal195_1481"/>
<dbReference type="HOGENOM" id="CLU_040318_1_2_6"/>
<dbReference type="Proteomes" id="UP000000770">
    <property type="component" value="Chromosome"/>
</dbReference>
<dbReference type="GO" id="GO:0022627">
    <property type="term" value="C:cytosolic small ribosomal subunit"/>
    <property type="evidence" value="ECO:0007669"/>
    <property type="project" value="TreeGrafter"/>
</dbReference>
<dbReference type="GO" id="GO:0003735">
    <property type="term" value="F:structural constituent of ribosome"/>
    <property type="evidence" value="ECO:0007669"/>
    <property type="project" value="InterPro"/>
</dbReference>
<dbReference type="GO" id="GO:0006412">
    <property type="term" value="P:translation"/>
    <property type="evidence" value="ECO:0007669"/>
    <property type="project" value="UniProtKB-UniRule"/>
</dbReference>
<dbReference type="CDD" id="cd01425">
    <property type="entry name" value="RPS2"/>
    <property type="match status" value="1"/>
</dbReference>
<dbReference type="FunFam" id="1.10.287.610:FF:000001">
    <property type="entry name" value="30S ribosomal protein S2"/>
    <property type="match status" value="1"/>
</dbReference>
<dbReference type="Gene3D" id="3.40.50.10490">
    <property type="entry name" value="Glucose-6-phosphate isomerase like protein, domain 1"/>
    <property type="match status" value="1"/>
</dbReference>
<dbReference type="Gene3D" id="1.10.287.610">
    <property type="entry name" value="Helix hairpin bin"/>
    <property type="match status" value="1"/>
</dbReference>
<dbReference type="HAMAP" id="MF_00291_B">
    <property type="entry name" value="Ribosomal_uS2_B"/>
    <property type="match status" value="1"/>
</dbReference>
<dbReference type="InterPro" id="IPR001865">
    <property type="entry name" value="Ribosomal_uS2"/>
</dbReference>
<dbReference type="InterPro" id="IPR005706">
    <property type="entry name" value="Ribosomal_uS2_bac/mit/plastid"/>
</dbReference>
<dbReference type="InterPro" id="IPR018130">
    <property type="entry name" value="Ribosomal_uS2_CS"/>
</dbReference>
<dbReference type="InterPro" id="IPR023591">
    <property type="entry name" value="Ribosomal_uS2_flav_dom_sf"/>
</dbReference>
<dbReference type="NCBIfam" id="TIGR01011">
    <property type="entry name" value="rpsB_bact"/>
    <property type="match status" value="1"/>
</dbReference>
<dbReference type="PANTHER" id="PTHR12534">
    <property type="entry name" value="30S RIBOSOMAL PROTEIN S2 PROKARYOTIC AND ORGANELLAR"/>
    <property type="match status" value="1"/>
</dbReference>
<dbReference type="PANTHER" id="PTHR12534:SF0">
    <property type="entry name" value="SMALL RIBOSOMAL SUBUNIT PROTEIN US2M"/>
    <property type="match status" value="1"/>
</dbReference>
<dbReference type="Pfam" id="PF00318">
    <property type="entry name" value="Ribosomal_S2"/>
    <property type="match status" value="1"/>
</dbReference>
<dbReference type="PRINTS" id="PR00395">
    <property type="entry name" value="RIBOSOMALS2"/>
</dbReference>
<dbReference type="SUPFAM" id="SSF52313">
    <property type="entry name" value="Ribosomal protein S2"/>
    <property type="match status" value="1"/>
</dbReference>
<dbReference type="PROSITE" id="PS00962">
    <property type="entry name" value="RIBOSOMAL_S2_1"/>
    <property type="match status" value="1"/>
</dbReference>
<dbReference type="PROSITE" id="PS00963">
    <property type="entry name" value="RIBOSOMAL_S2_2"/>
    <property type="match status" value="1"/>
</dbReference>
<gene>
    <name evidence="1" type="primary">rpsB</name>
    <name type="ordered locus">Sbal195_1481</name>
</gene>
<keyword id="KW-0687">Ribonucleoprotein</keyword>
<keyword id="KW-0689">Ribosomal protein</keyword>
<organism>
    <name type="scientific">Shewanella baltica (strain OS195)</name>
    <dbReference type="NCBI Taxonomy" id="399599"/>
    <lineage>
        <taxon>Bacteria</taxon>
        <taxon>Pseudomonadati</taxon>
        <taxon>Pseudomonadota</taxon>
        <taxon>Gammaproteobacteria</taxon>
        <taxon>Alteromonadales</taxon>
        <taxon>Shewanellaceae</taxon>
        <taxon>Shewanella</taxon>
    </lineage>
</organism>
<comment type="similarity">
    <text evidence="1">Belongs to the universal ribosomal protein uS2 family.</text>
</comment>
<feature type="chain" id="PRO_1000078899" description="Small ribosomal subunit protein uS2">
    <location>
        <begin position="1"/>
        <end position="242"/>
    </location>
</feature>